<evidence type="ECO:0000269" key="1">
    <source>
    </source>
</evidence>
<evidence type="ECO:0000303" key="2">
    <source>
    </source>
</evidence>
<evidence type="ECO:0000303" key="3">
    <source>
    </source>
</evidence>
<evidence type="ECO:0000305" key="4"/>
<evidence type="ECO:0000305" key="5">
    <source>
    </source>
</evidence>
<evidence type="ECO:0000305" key="6">
    <source>
    </source>
</evidence>
<evidence type="ECO:0000312" key="7">
    <source>
        <dbReference type="EMBL" id="EOP43920.1"/>
    </source>
</evidence>
<dbReference type="EC" id="2.7.7.-" evidence="4"/>
<dbReference type="EMBL" id="AHFE01000034">
    <property type="protein sequence ID" value="EOP43920.1"/>
    <property type="molecule type" value="Genomic_DNA"/>
</dbReference>
<dbReference type="RefSeq" id="WP_016119572.1">
    <property type="nucleotide sequence ID" value="NZ_KB976676.1"/>
</dbReference>
<dbReference type="SMR" id="R8NBN0"/>
<dbReference type="PATRIC" id="fig|1053236.3.peg.1317"/>
<dbReference type="HOGENOM" id="CLU_051351_0_1_9"/>
<dbReference type="Proteomes" id="UP000014020">
    <property type="component" value="Unassembled WGS sequence"/>
</dbReference>
<dbReference type="GO" id="GO:0005524">
    <property type="term" value="F:ATP binding"/>
    <property type="evidence" value="ECO:0007669"/>
    <property type="project" value="UniProtKB-KW"/>
</dbReference>
<dbReference type="GO" id="GO:0016779">
    <property type="term" value="F:nucleotidyltransferase activity"/>
    <property type="evidence" value="ECO:0007669"/>
    <property type="project" value="UniProtKB-KW"/>
</dbReference>
<dbReference type="GO" id="GO:0051607">
    <property type="term" value="P:defense response to virus"/>
    <property type="evidence" value="ECO:0007669"/>
    <property type="project" value="UniProtKB-KW"/>
</dbReference>
<dbReference type="GO" id="GO:0009117">
    <property type="term" value="P:nucleotide metabolic process"/>
    <property type="evidence" value="ECO:0007669"/>
    <property type="project" value="UniProtKB-KW"/>
</dbReference>
<dbReference type="Gene3D" id="3.30.460.90">
    <property type="match status" value="1"/>
</dbReference>
<dbReference type="InterPro" id="IPR043519">
    <property type="entry name" value="NT_sf"/>
</dbReference>
<dbReference type="SUPFAM" id="SSF81301">
    <property type="entry name" value="Nucleotidyltransferase"/>
    <property type="match status" value="1"/>
</dbReference>
<proteinExistence type="inferred from homology"/>
<sequence length="331" mass="38253">MVKTANSAYDNFIKNSVDLDSEQTGIARNSRDWLYGNLKNFPKVVENFPKLYAGKEIIGFGSFRRRTKIRPLDDIDLMLVFTGEGTTYTEYADKIVLNVPGDADKLRKLVNDDGTLNSIRVIEKIKSSLSIIPQYKKAEIHRRQEATTLELSTYDWVFDIVPAFITSENAYGKSYYIIPDGSGNWKKTDPRIDNERATETNQKFDGNVLGLIRVIKYWNTNRSKKISSYLMENIVLDYFQNKFYWNGMKQELRGFFEYLKTSIYNSHYDPKGIQGDLNTLDYNTKLSISNQASGCFENIDLAIRYESLGQHKEAIECWKKVFGDEFPSHED</sequence>
<keyword id="KW-0051">Antiviral defense</keyword>
<keyword id="KW-0067">ATP-binding</keyword>
<keyword id="KW-0546">Nucleotide metabolism</keyword>
<keyword id="KW-0547">Nucleotide-binding</keyword>
<keyword id="KW-0548">Nucleotidyltransferase</keyword>
<keyword id="KW-0808">Transferase</keyword>
<gene>
    <name evidence="2" type="primary">cdnD</name>
    <name evidence="7" type="ORF">IK1_05630</name>
</gene>
<organism>
    <name type="scientific">Bacillus cereus (strain VD146)</name>
    <dbReference type="NCBI Taxonomy" id="1053236"/>
    <lineage>
        <taxon>Bacteria</taxon>
        <taxon>Bacillati</taxon>
        <taxon>Bacillota</taxon>
        <taxon>Bacilli</taxon>
        <taxon>Bacillales</taxon>
        <taxon>Bacillaceae</taxon>
        <taxon>Bacillus</taxon>
        <taxon>Bacillus cereus group</taxon>
    </lineage>
</organism>
<comment type="function">
    <text evidence="1 3 5 6">Cyclic nucleotide synthase (second messenger synthase) of a CBASS antivirus system (Probable) (PubMed:30787435, PubMed:31533127). CBASS (cyclic oligonucleotide-based antiphage signaling system) provides immunity against bacteriophage. The CD-NTase protein synthesizes cyclic nucleotides in response to infection; these serve as specific second messenger signals. The signals activate a diverse range of effectors, leading to bacterial cell death and thus abortive phage infection (PubMed:31533127). A type I-B CBASS system (PubMed:32839535).</text>
</comment>
<comment type="function">
    <text evidence="5 6">Probably a cyclic nucleotide synthase that makes second messenger nucleotide which activates a CBASS antiviral defense system.</text>
</comment>
<comment type="function">
    <text evidence="1">Protects B.subtilis against phage infection. When IK1_05630 and IK1_05631 are introduced in B.subtilis BEST7003 there is 1000-fold protection against phage SBSphiC. Both genes are required for protection. Activation leads to bacterial cell lysis and death, which occurs before the phage has finished its replication cycle, thus protecting non-infected bacteria by aborting the phage infection and preventing its propagation.</text>
</comment>
<comment type="induction">
    <text evidence="6">Part of the CBASS operon consisting of cdnD-IK1_05631.</text>
</comment>
<comment type="similarity">
    <text evidence="5">Belongs to the CD-NTase family. D12 subfamily.</text>
</comment>
<feature type="chain" id="PRO_0000451854" description="Probable cyclic nucleotide synthase IK1_05630">
    <location>
        <begin position="1"/>
        <end position="331"/>
    </location>
</feature>
<accession>R8NBN0</accession>
<name>CDND_BACCX</name>
<protein>
    <recommendedName>
        <fullName evidence="4">Probable cyclic nucleotide synthase IK1_05630</fullName>
        <ecNumber evidence="4">2.7.7.-</ecNumber>
    </recommendedName>
</protein>
<reference key="1">
    <citation type="submission" date="2012-12" db="EMBL/GenBank/DDBJ databases">
        <title>The genome sequence of Bacillus cereus VD146.</title>
        <authorList>
            <consortium name="The Broad Institute Genome Sequencing Platform"/>
            <consortium name="The Broad Institute Genome Sequencing Center for Infectious Disease"/>
            <person name="Feldgarden M."/>
            <person name="Van der Auwera G.A."/>
            <person name="Mahillon J."/>
            <person name="Duprez V."/>
            <person name="Timmery S."/>
            <person name="Mattelet C."/>
            <person name="Dierick K."/>
            <person name="Sun M."/>
            <person name="Yu Z."/>
            <person name="Zhu L."/>
            <person name="Hu X."/>
            <person name="Shank E.B."/>
            <person name="Swiecicka I."/>
            <person name="Hansen B.M."/>
            <person name="Andrup L."/>
            <person name="Walker B."/>
            <person name="Young S.K."/>
            <person name="Zeng Q."/>
            <person name="Gargeya S."/>
            <person name="Fitzgerald M."/>
            <person name="Haas B."/>
            <person name="Abouelleil A."/>
            <person name="Alvarado L."/>
            <person name="Arachchi H.M."/>
            <person name="Berlin A.M."/>
            <person name="Chapman S.B."/>
            <person name="Dewar J."/>
            <person name="Goldberg J."/>
            <person name="Griggs A."/>
            <person name="Gujja S."/>
            <person name="Hansen M."/>
            <person name="Howarth C."/>
            <person name="Imamovic A."/>
            <person name="Larimer J."/>
            <person name="McCowan C."/>
            <person name="Murphy C."/>
            <person name="Neiman D."/>
            <person name="Pearson M."/>
            <person name="Priest M."/>
            <person name="Roberts A."/>
            <person name="Saif S."/>
            <person name="Shea T."/>
            <person name="Sisk P."/>
            <person name="Sykes S."/>
            <person name="Wortman J."/>
            <person name="Nusbaum C."/>
            <person name="Birren B."/>
        </authorList>
    </citation>
    <scope>NUCLEOTIDE SEQUENCE [LARGE SCALE GENOMIC DNA]</scope>
    <source>
        <strain>VD146</strain>
    </source>
</reference>
<reference key="2">
    <citation type="journal article" date="2019" name="Nature">
        <title>Bacterial cGAS-like enzymes synthesize diverse nucleotide signals.</title>
        <authorList>
            <person name="Whiteley A.T."/>
            <person name="Eaglesham J.B."/>
            <person name="de Oliveira Mann C.C."/>
            <person name="Morehouse B.R."/>
            <person name="Lowey B."/>
            <person name="Nieminen E.A."/>
            <person name="Danilchanka O."/>
            <person name="King D.S."/>
            <person name="Lee A.S.Y."/>
            <person name="Mekalanos J.J."/>
            <person name="Kranzusch P.J."/>
        </authorList>
    </citation>
    <scope>NOMENCLATURE</scope>
    <scope>SIMILARITY</scope>
    <source>
        <strain>VD146</strain>
    </source>
</reference>
<reference key="3">
    <citation type="journal article" date="2019" name="Nature">
        <title>Cyclic GMP-AMP signalling protects bacteria against viral infection.</title>
        <authorList>
            <person name="Cohen D."/>
            <person name="Melamed S."/>
            <person name="Millman A."/>
            <person name="Shulman G."/>
            <person name="Oppenheimer-Shaanan Y."/>
            <person name="Kacen A."/>
            <person name="Doron S."/>
            <person name="Amitai G."/>
            <person name="Sorek R."/>
        </authorList>
    </citation>
    <scope>ANTIVIRAL DEFENSE</scope>
    <scope>NOMENCLATURE</scope>
    <scope>OPERON STRUCTURE</scope>
    <source>
        <strain>VD146</strain>
    </source>
</reference>
<reference key="4">
    <citation type="journal article" date="2020" name="Nat. Microbiol.">
        <title>Diversity and classification of cyclic-oligonucleotide-based anti-phage signalling systems.</title>
        <authorList>
            <person name="Millman A."/>
            <person name="Melamed S."/>
            <person name="Amitai G."/>
            <person name="Sorek R."/>
        </authorList>
    </citation>
    <scope>CLASSIFICATION AND NOMENCLATURE</scope>
</reference>